<name>FABZ_POLNA</name>
<keyword id="KW-0963">Cytoplasm</keyword>
<keyword id="KW-0441">Lipid A biosynthesis</keyword>
<keyword id="KW-0444">Lipid biosynthesis</keyword>
<keyword id="KW-0443">Lipid metabolism</keyword>
<keyword id="KW-0456">Lyase</keyword>
<keyword id="KW-1185">Reference proteome</keyword>
<organism>
    <name type="scientific">Polaromonas naphthalenivorans (strain CJ2)</name>
    <dbReference type="NCBI Taxonomy" id="365044"/>
    <lineage>
        <taxon>Bacteria</taxon>
        <taxon>Pseudomonadati</taxon>
        <taxon>Pseudomonadota</taxon>
        <taxon>Betaproteobacteria</taxon>
        <taxon>Burkholderiales</taxon>
        <taxon>Comamonadaceae</taxon>
        <taxon>Polaromonas</taxon>
    </lineage>
</organism>
<dbReference type="EC" id="4.2.1.59" evidence="1"/>
<dbReference type="EMBL" id="CP000529">
    <property type="protein sequence ID" value="ABM37079.1"/>
    <property type="status" value="ALT_INIT"/>
    <property type="molecule type" value="Genomic_DNA"/>
</dbReference>
<dbReference type="RefSeq" id="WP_011801160.1">
    <property type="nucleotide sequence ID" value="NC_008781.1"/>
</dbReference>
<dbReference type="SMR" id="A1VN51"/>
<dbReference type="STRING" id="365044.Pnap_1769"/>
<dbReference type="KEGG" id="pna:Pnap_1769"/>
<dbReference type="eggNOG" id="COG0764">
    <property type="taxonomic scope" value="Bacteria"/>
</dbReference>
<dbReference type="HOGENOM" id="CLU_078912_1_0_4"/>
<dbReference type="OrthoDB" id="9772788at2"/>
<dbReference type="Proteomes" id="UP000000644">
    <property type="component" value="Chromosome"/>
</dbReference>
<dbReference type="GO" id="GO:0005737">
    <property type="term" value="C:cytoplasm"/>
    <property type="evidence" value="ECO:0007669"/>
    <property type="project" value="UniProtKB-SubCell"/>
</dbReference>
<dbReference type="GO" id="GO:0016020">
    <property type="term" value="C:membrane"/>
    <property type="evidence" value="ECO:0007669"/>
    <property type="project" value="GOC"/>
</dbReference>
<dbReference type="GO" id="GO:0019171">
    <property type="term" value="F:(3R)-hydroxyacyl-[acyl-carrier-protein] dehydratase activity"/>
    <property type="evidence" value="ECO:0007669"/>
    <property type="project" value="UniProtKB-EC"/>
</dbReference>
<dbReference type="GO" id="GO:0006633">
    <property type="term" value="P:fatty acid biosynthetic process"/>
    <property type="evidence" value="ECO:0007669"/>
    <property type="project" value="UniProtKB-UniRule"/>
</dbReference>
<dbReference type="GO" id="GO:0009245">
    <property type="term" value="P:lipid A biosynthetic process"/>
    <property type="evidence" value="ECO:0007669"/>
    <property type="project" value="UniProtKB-UniRule"/>
</dbReference>
<dbReference type="CDD" id="cd01288">
    <property type="entry name" value="FabZ"/>
    <property type="match status" value="1"/>
</dbReference>
<dbReference type="FunFam" id="3.10.129.10:FF:000001">
    <property type="entry name" value="3-hydroxyacyl-[acyl-carrier-protein] dehydratase FabZ"/>
    <property type="match status" value="1"/>
</dbReference>
<dbReference type="Gene3D" id="3.10.129.10">
    <property type="entry name" value="Hotdog Thioesterase"/>
    <property type="match status" value="1"/>
</dbReference>
<dbReference type="HAMAP" id="MF_00406">
    <property type="entry name" value="FabZ"/>
    <property type="match status" value="1"/>
</dbReference>
<dbReference type="InterPro" id="IPR013114">
    <property type="entry name" value="FabA_FabZ"/>
</dbReference>
<dbReference type="InterPro" id="IPR010084">
    <property type="entry name" value="FabZ"/>
</dbReference>
<dbReference type="InterPro" id="IPR029069">
    <property type="entry name" value="HotDog_dom_sf"/>
</dbReference>
<dbReference type="NCBIfam" id="TIGR01750">
    <property type="entry name" value="fabZ"/>
    <property type="match status" value="1"/>
</dbReference>
<dbReference type="NCBIfam" id="NF000582">
    <property type="entry name" value="PRK00006.1"/>
    <property type="match status" value="1"/>
</dbReference>
<dbReference type="PANTHER" id="PTHR30272">
    <property type="entry name" value="3-HYDROXYACYL-[ACYL-CARRIER-PROTEIN] DEHYDRATASE"/>
    <property type="match status" value="1"/>
</dbReference>
<dbReference type="PANTHER" id="PTHR30272:SF1">
    <property type="entry name" value="3-HYDROXYACYL-[ACYL-CARRIER-PROTEIN] DEHYDRATASE"/>
    <property type="match status" value="1"/>
</dbReference>
<dbReference type="Pfam" id="PF07977">
    <property type="entry name" value="FabA"/>
    <property type="match status" value="1"/>
</dbReference>
<dbReference type="SUPFAM" id="SSF54637">
    <property type="entry name" value="Thioesterase/thiol ester dehydrase-isomerase"/>
    <property type="match status" value="1"/>
</dbReference>
<comment type="function">
    <text evidence="1">Involved in unsaturated fatty acids biosynthesis. Catalyzes the dehydration of short chain beta-hydroxyacyl-ACPs and long chain saturated and unsaturated beta-hydroxyacyl-ACPs.</text>
</comment>
<comment type="catalytic activity">
    <reaction evidence="1">
        <text>a (3R)-hydroxyacyl-[ACP] = a (2E)-enoyl-[ACP] + H2O</text>
        <dbReference type="Rhea" id="RHEA:13097"/>
        <dbReference type="Rhea" id="RHEA-COMP:9925"/>
        <dbReference type="Rhea" id="RHEA-COMP:9945"/>
        <dbReference type="ChEBI" id="CHEBI:15377"/>
        <dbReference type="ChEBI" id="CHEBI:78784"/>
        <dbReference type="ChEBI" id="CHEBI:78827"/>
        <dbReference type="EC" id="4.2.1.59"/>
    </reaction>
</comment>
<comment type="subcellular location">
    <subcellularLocation>
        <location evidence="1">Cytoplasm</location>
    </subcellularLocation>
</comment>
<comment type="similarity">
    <text evidence="1">Belongs to the thioester dehydratase family. FabZ subfamily.</text>
</comment>
<comment type="sequence caution" evidence="2">
    <conflict type="erroneous initiation">
        <sequence resource="EMBL-CDS" id="ABM37079"/>
    </conflict>
</comment>
<protein>
    <recommendedName>
        <fullName evidence="1">3-hydroxyacyl-[acyl-carrier-protein] dehydratase FabZ</fullName>
        <ecNumber evidence="1">4.2.1.59</ecNumber>
    </recommendedName>
    <alternativeName>
        <fullName evidence="1">(3R)-hydroxymyristoyl-[acyl-carrier-protein] dehydratase</fullName>
        <shortName evidence="1">(3R)-hydroxymyristoyl-ACP dehydrase</shortName>
    </alternativeName>
    <alternativeName>
        <fullName evidence="1">Beta-hydroxyacyl-ACP dehydratase</fullName>
    </alternativeName>
</protein>
<gene>
    <name evidence="1" type="primary">fabZ</name>
    <name type="ordered locus">Pnap_1769</name>
</gene>
<accession>A1VN51</accession>
<sequence>MDIHQILKLLPHRYPILLVDRVLEIETGKRIKALKNVTINEPFFMGHFPKHPVMPGVLMIEAMAQAAALLSFSTLGVTPDDKTVYYFAGIDGARFKRPVGPGDQLIMDVELLRMKAGIFKFKGVCRVDENLACEAELMCTMRTVA</sequence>
<proteinExistence type="inferred from homology"/>
<feature type="chain" id="PRO_0000340794" description="3-hydroxyacyl-[acyl-carrier-protein] dehydratase FabZ">
    <location>
        <begin position="1"/>
        <end position="145"/>
    </location>
</feature>
<feature type="active site" evidence="1">
    <location>
        <position position="47"/>
    </location>
</feature>
<reference key="1">
    <citation type="journal article" date="2009" name="Environ. Microbiol.">
        <title>The genome of Polaromonas naphthalenivorans strain CJ2, isolated from coal tar-contaminated sediment, reveals physiological and metabolic versatility and evolution through extensive horizontal gene transfer.</title>
        <authorList>
            <person name="Yagi J.M."/>
            <person name="Sims D."/>
            <person name="Brettin T."/>
            <person name="Bruce D."/>
            <person name="Madsen E.L."/>
        </authorList>
    </citation>
    <scope>NUCLEOTIDE SEQUENCE [LARGE SCALE GENOMIC DNA]</scope>
    <source>
        <strain>CJ2</strain>
    </source>
</reference>
<evidence type="ECO:0000255" key="1">
    <source>
        <dbReference type="HAMAP-Rule" id="MF_00406"/>
    </source>
</evidence>
<evidence type="ECO:0000305" key="2"/>